<protein>
    <recommendedName>
        <fullName evidence="1">3-dehydroquinate dehydratase</fullName>
        <shortName evidence="1">3-dehydroquinase</shortName>
        <ecNumber evidence="1">4.2.1.10</ecNumber>
    </recommendedName>
    <alternativeName>
        <fullName evidence="1">Type II DHQase</fullName>
    </alternativeName>
</protein>
<reference key="1">
    <citation type="submission" date="2008-05" db="EMBL/GenBank/DDBJ databases">
        <title>Genome sequence of Helicobacter pylori from the remote Amazon: traces of Asian ancestry of the first Americans.</title>
        <authorList>
            <person name="Kersulyte D."/>
            <person name="Kalia A."/>
            <person name="Gilman R.H."/>
            <person name="Berg D.E."/>
        </authorList>
    </citation>
    <scope>NUCLEOTIDE SEQUENCE [LARGE SCALE GENOMIC DNA]</scope>
    <source>
        <strain>Shi470</strain>
    </source>
</reference>
<dbReference type="EC" id="4.2.1.10" evidence="1"/>
<dbReference type="EMBL" id="CP001072">
    <property type="protein sequence ID" value="ACD47875.1"/>
    <property type="molecule type" value="Genomic_DNA"/>
</dbReference>
<dbReference type="RefSeq" id="WP_000699289.1">
    <property type="nucleotide sequence ID" value="NC_010698.2"/>
</dbReference>
<dbReference type="SMR" id="B2USP3"/>
<dbReference type="GeneID" id="93236779"/>
<dbReference type="KEGG" id="hps:HPSH_02125"/>
<dbReference type="HOGENOM" id="CLU_090968_3_0_7"/>
<dbReference type="UniPathway" id="UPA00053">
    <property type="reaction ID" value="UER00086"/>
</dbReference>
<dbReference type="GO" id="GO:0003855">
    <property type="term" value="F:3-dehydroquinate dehydratase activity"/>
    <property type="evidence" value="ECO:0007669"/>
    <property type="project" value="UniProtKB-UniRule"/>
</dbReference>
<dbReference type="GO" id="GO:0008652">
    <property type="term" value="P:amino acid biosynthetic process"/>
    <property type="evidence" value="ECO:0007669"/>
    <property type="project" value="UniProtKB-KW"/>
</dbReference>
<dbReference type="GO" id="GO:0009073">
    <property type="term" value="P:aromatic amino acid family biosynthetic process"/>
    <property type="evidence" value="ECO:0007669"/>
    <property type="project" value="UniProtKB-KW"/>
</dbReference>
<dbReference type="GO" id="GO:0009423">
    <property type="term" value="P:chorismate biosynthetic process"/>
    <property type="evidence" value="ECO:0007669"/>
    <property type="project" value="UniProtKB-UniRule"/>
</dbReference>
<dbReference type="GO" id="GO:0019631">
    <property type="term" value="P:quinate catabolic process"/>
    <property type="evidence" value="ECO:0007669"/>
    <property type="project" value="TreeGrafter"/>
</dbReference>
<dbReference type="CDD" id="cd00466">
    <property type="entry name" value="DHQase_II"/>
    <property type="match status" value="1"/>
</dbReference>
<dbReference type="Gene3D" id="3.40.50.9100">
    <property type="entry name" value="Dehydroquinase, class II"/>
    <property type="match status" value="1"/>
</dbReference>
<dbReference type="HAMAP" id="MF_00169">
    <property type="entry name" value="AroQ"/>
    <property type="match status" value="1"/>
</dbReference>
<dbReference type="InterPro" id="IPR001874">
    <property type="entry name" value="DHquinase_II"/>
</dbReference>
<dbReference type="InterPro" id="IPR018509">
    <property type="entry name" value="DHquinase_II_CS"/>
</dbReference>
<dbReference type="InterPro" id="IPR036441">
    <property type="entry name" value="DHquinase_II_sf"/>
</dbReference>
<dbReference type="NCBIfam" id="TIGR01088">
    <property type="entry name" value="aroQ"/>
    <property type="match status" value="1"/>
</dbReference>
<dbReference type="NCBIfam" id="NF003805">
    <property type="entry name" value="PRK05395.1-2"/>
    <property type="match status" value="1"/>
</dbReference>
<dbReference type="NCBIfam" id="NF003806">
    <property type="entry name" value="PRK05395.1-3"/>
    <property type="match status" value="1"/>
</dbReference>
<dbReference type="NCBIfam" id="NF003807">
    <property type="entry name" value="PRK05395.1-4"/>
    <property type="match status" value="1"/>
</dbReference>
<dbReference type="PANTHER" id="PTHR21272">
    <property type="entry name" value="CATABOLIC 3-DEHYDROQUINASE"/>
    <property type="match status" value="1"/>
</dbReference>
<dbReference type="PANTHER" id="PTHR21272:SF3">
    <property type="entry name" value="CATABOLIC 3-DEHYDROQUINASE"/>
    <property type="match status" value="1"/>
</dbReference>
<dbReference type="Pfam" id="PF01220">
    <property type="entry name" value="DHquinase_II"/>
    <property type="match status" value="1"/>
</dbReference>
<dbReference type="PIRSF" id="PIRSF001399">
    <property type="entry name" value="DHquinase_II"/>
    <property type="match status" value="1"/>
</dbReference>
<dbReference type="SUPFAM" id="SSF52304">
    <property type="entry name" value="Type II 3-dehydroquinate dehydratase"/>
    <property type="match status" value="1"/>
</dbReference>
<dbReference type="PROSITE" id="PS01029">
    <property type="entry name" value="DEHYDROQUINASE_II"/>
    <property type="match status" value="1"/>
</dbReference>
<sequence>MKILVIQGPNLNMLGHRDPRLYGMVTLDQIHEIMQTFVKQGNLDVELEFFQTNFEGEIIDKIQESVGSDYEGIIINPGAFSHTSIAIADAIMLAGKPVIEVHLTNIQAREEFRKNSYTGAACGGVIMGFGPLGYNMALMAMVNILAEMKAFQEAQQNNPNNPINNQK</sequence>
<organism>
    <name type="scientific">Helicobacter pylori (strain Shi470)</name>
    <dbReference type="NCBI Taxonomy" id="512562"/>
    <lineage>
        <taxon>Bacteria</taxon>
        <taxon>Pseudomonadati</taxon>
        <taxon>Campylobacterota</taxon>
        <taxon>Epsilonproteobacteria</taxon>
        <taxon>Campylobacterales</taxon>
        <taxon>Helicobacteraceae</taxon>
        <taxon>Helicobacter</taxon>
    </lineage>
</organism>
<accession>B2USP3</accession>
<name>AROQ_HELPS</name>
<comment type="function">
    <text evidence="1">Catalyzes a trans-dehydration via an enolate intermediate.</text>
</comment>
<comment type="catalytic activity">
    <reaction evidence="1">
        <text>3-dehydroquinate = 3-dehydroshikimate + H2O</text>
        <dbReference type="Rhea" id="RHEA:21096"/>
        <dbReference type="ChEBI" id="CHEBI:15377"/>
        <dbReference type="ChEBI" id="CHEBI:16630"/>
        <dbReference type="ChEBI" id="CHEBI:32364"/>
        <dbReference type="EC" id="4.2.1.10"/>
    </reaction>
</comment>
<comment type="pathway">
    <text evidence="1">Metabolic intermediate biosynthesis; chorismate biosynthesis; chorismate from D-erythrose 4-phosphate and phosphoenolpyruvate: step 3/7.</text>
</comment>
<comment type="subunit">
    <text evidence="1">Homododecamer.</text>
</comment>
<comment type="similarity">
    <text evidence="1">Belongs to the type-II 3-dehydroquinase family.</text>
</comment>
<evidence type="ECO:0000255" key="1">
    <source>
        <dbReference type="HAMAP-Rule" id="MF_00169"/>
    </source>
</evidence>
<feature type="chain" id="PRO_1000097604" description="3-dehydroquinate dehydratase">
    <location>
        <begin position="1"/>
        <end position="167"/>
    </location>
</feature>
<feature type="active site" description="Proton acceptor" evidence="1">
    <location>
        <position position="22"/>
    </location>
</feature>
<feature type="active site" description="Proton donor" evidence="1">
    <location>
        <position position="102"/>
    </location>
</feature>
<feature type="binding site" evidence="1">
    <location>
        <position position="76"/>
    </location>
    <ligand>
        <name>substrate</name>
    </ligand>
</feature>
<feature type="binding site" evidence="1">
    <location>
        <position position="82"/>
    </location>
    <ligand>
        <name>substrate</name>
    </ligand>
</feature>
<feature type="binding site" evidence="1">
    <location>
        <position position="89"/>
    </location>
    <ligand>
        <name>substrate</name>
    </ligand>
</feature>
<feature type="binding site" evidence="1">
    <location>
        <begin position="103"/>
        <end position="104"/>
    </location>
    <ligand>
        <name>substrate</name>
    </ligand>
</feature>
<feature type="binding site" evidence="1">
    <location>
        <position position="113"/>
    </location>
    <ligand>
        <name>substrate</name>
    </ligand>
</feature>
<feature type="site" description="Transition state stabilizer" evidence="1">
    <location>
        <position position="17"/>
    </location>
</feature>
<keyword id="KW-0028">Amino-acid biosynthesis</keyword>
<keyword id="KW-0057">Aromatic amino acid biosynthesis</keyword>
<keyword id="KW-0456">Lyase</keyword>
<proteinExistence type="inferred from homology"/>
<gene>
    <name evidence="1" type="primary">aroQ</name>
    <name type="ordered locus">HPSH_02125</name>
</gene>